<feature type="chain" id="PRO_0000118741" description="NAD(P)H-quinone oxidoreductase subunit K, chloroplastic">
    <location>
        <begin position="1"/>
        <end position="250"/>
    </location>
</feature>
<feature type="binding site" evidence="1">
    <location>
        <position position="67"/>
    </location>
    <ligand>
        <name>[4Fe-4S] cluster</name>
        <dbReference type="ChEBI" id="CHEBI:49883"/>
    </ligand>
</feature>
<feature type="binding site" evidence="1">
    <location>
        <position position="68"/>
    </location>
    <ligand>
        <name>[4Fe-4S] cluster</name>
        <dbReference type="ChEBI" id="CHEBI:49883"/>
    </ligand>
</feature>
<feature type="binding site" evidence="1">
    <location>
        <position position="132"/>
    </location>
    <ligand>
        <name>[4Fe-4S] cluster</name>
        <dbReference type="ChEBI" id="CHEBI:49883"/>
    </ligand>
</feature>
<feature type="binding site" evidence="1">
    <location>
        <position position="163"/>
    </location>
    <ligand>
        <name>[4Fe-4S] cluster</name>
        <dbReference type="ChEBI" id="CHEBI:49883"/>
    </ligand>
</feature>
<evidence type="ECO:0000255" key="1">
    <source>
        <dbReference type="HAMAP-Rule" id="MF_01356"/>
    </source>
</evidence>
<evidence type="ECO:0000269" key="2">
    <source>
    </source>
</evidence>
<dbReference type="EC" id="7.1.1.-" evidence="1"/>
<dbReference type="EMBL" id="AY178864">
    <property type="protein sequence ID" value="AAP29396.2"/>
    <property type="molecule type" value="Genomic_DNA"/>
</dbReference>
<dbReference type="RefSeq" id="NP_848064.3">
    <property type="nucleotide sequence ID" value="NC_004766.1"/>
</dbReference>
<dbReference type="SMR" id="Q85FL6"/>
<dbReference type="GeneID" id="807343"/>
<dbReference type="GO" id="GO:0009535">
    <property type="term" value="C:chloroplast thylakoid membrane"/>
    <property type="evidence" value="ECO:0007669"/>
    <property type="project" value="UniProtKB-SubCell"/>
</dbReference>
<dbReference type="GO" id="GO:0045271">
    <property type="term" value="C:respiratory chain complex I"/>
    <property type="evidence" value="ECO:0007669"/>
    <property type="project" value="TreeGrafter"/>
</dbReference>
<dbReference type="GO" id="GO:0051539">
    <property type="term" value="F:4 iron, 4 sulfur cluster binding"/>
    <property type="evidence" value="ECO:0007669"/>
    <property type="project" value="UniProtKB-KW"/>
</dbReference>
<dbReference type="GO" id="GO:0005506">
    <property type="term" value="F:iron ion binding"/>
    <property type="evidence" value="ECO:0007669"/>
    <property type="project" value="UniProtKB-UniRule"/>
</dbReference>
<dbReference type="GO" id="GO:0008137">
    <property type="term" value="F:NADH dehydrogenase (ubiquinone) activity"/>
    <property type="evidence" value="ECO:0007669"/>
    <property type="project" value="InterPro"/>
</dbReference>
<dbReference type="GO" id="GO:0048038">
    <property type="term" value="F:quinone binding"/>
    <property type="evidence" value="ECO:0007669"/>
    <property type="project" value="UniProtKB-KW"/>
</dbReference>
<dbReference type="GO" id="GO:0009060">
    <property type="term" value="P:aerobic respiration"/>
    <property type="evidence" value="ECO:0007669"/>
    <property type="project" value="TreeGrafter"/>
</dbReference>
<dbReference type="GO" id="GO:0015990">
    <property type="term" value="P:electron transport coupled proton transport"/>
    <property type="evidence" value="ECO:0007669"/>
    <property type="project" value="TreeGrafter"/>
</dbReference>
<dbReference type="GO" id="GO:0019684">
    <property type="term" value="P:photosynthesis, light reaction"/>
    <property type="evidence" value="ECO:0007669"/>
    <property type="project" value="UniProtKB-UniRule"/>
</dbReference>
<dbReference type="FunFam" id="3.40.50.12280:FF:000003">
    <property type="entry name" value="NAD(P)H-quinone oxidoreductase subunit K, chloroplastic"/>
    <property type="match status" value="1"/>
</dbReference>
<dbReference type="Gene3D" id="3.40.50.12280">
    <property type="match status" value="1"/>
</dbReference>
<dbReference type="HAMAP" id="MF_01356">
    <property type="entry name" value="NDH1_NuoB"/>
    <property type="match status" value="1"/>
</dbReference>
<dbReference type="InterPro" id="IPR006137">
    <property type="entry name" value="NADH_UbQ_OxRdtase-like_20kDa"/>
</dbReference>
<dbReference type="InterPro" id="IPR006138">
    <property type="entry name" value="NADH_UQ_OxRdtase_20Kd_su"/>
</dbReference>
<dbReference type="NCBIfam" id="TIGR01957">
    <property type="entry name" value="nuoB_fam"/>
    <property type="match status" value="1"/>
</dbReference>
<dbReference type="NCBIfam" id="NF005012">
    <property type="entry name" value="PRK06411.1"/>
    <property type="match status" value="1"/>
</dbReference>
<dbReference type="PANTHER" id="PTHR11995">
    <property type="entry name" value="NADH DEHYDROGENASE"/>
    <property type="match status" value="1"/>
</dbReference>
<dbReference type="PANTHER" id="PTHR11995:SF14">
    <property type="entry name" value="NADH DEHYDROGENASE [UBIQUINONE] IRON-SULFUR PROTEIN 7, MITOCHONDRIAL"/>
    <property type="match status" value="1"/>
</dbReference>
<dbReference type="Pfam" id="PF01058">
    <property type="entry name" value="Oxidored_q6"/>
    <property type="match status" value="1"/>
</dbReference>
<dbReference type="SUPFAM" id="SSF56770">
    <property type="entry name" value="HydA/Nqo6-like"/>
    <property type="match status" value="1"/>
</dbReference>
<dbReference type="PROSITE" id="PS01150">
    <property type="entry name" value="COMPLEX1_20K"/>
    <property type="match status" value="1"/>
</dbReference>
<keyword id="KW-0004">4Fe-4S</keyword>
<keyword id="KW-0150">Chloroplast</keyword>
<keyword id="KW-0408">Iron</keyword>
<keyword id="KW-0411">Iron-sulfur</keyword>
<keyword id="KW-0472">Membrane</keyword>
<keyword id="KW-0479">Metal-binding</keyword>
<keyword id="KW-0520">NAD</keyword>
<keyword id="KW-0521">NADP</keyword>
<keyword id="KW-0934">Plastid</keyword>
<keyword id="KW-0618">Plastoquinone</keyword>
<keyword id="KW-0874">Quinone</keyword>
<keyword id="KW-0691">RNA editing</keyword>
<keyword id="KW-0793">Thylakoid</keyword>
<keyword id="KW-1278">Translocase</keyword>
<keyword id="KW-0813">Transport</keyword>
<geneLocation type="chloroplast"/>
<proteinExistence type="evidence at transcript level"/>
<organism>
    <name type="scientific">Adiantum capillus-veneris</name>
    <name type="common">Maidenhair fern</name>
    <dbReference type="NCBI Taxonomy" id="13818"/>
    <lineage>
        <taxon>Eukaryota</taxon>
        <taxon>Viridiplantae</taxon>
        <taxon>Streptophyta</taxon>
        <taxon>Embryophyta</taxon>
        <taxon>Tracheophyta</taxon>
        <taxon>Polypodiopsida</taxon>
        <taxon>Polypodiidae</taxon>
        <taxon>Polypodiales</taxon>
        <taxon>Pteridineae</taxon>
        <taxon>Pteridaceae</taxon>
        <taxon>Vittarioideae</taxon>
        <taxon>Adiantum</taxon>
    </lineage>
</organism>
<gene>
    <name evidence="1" type="primary">ndhK</name>
</gene>
<sequence length="250" mass="27983">MVLTSDHLDKKNIRKIEYKGEDSFSNSMSKLPLQGGMSDSIFMASISDFSNWSRLSSLWPLLYGTSCCFIEFASLIGSRFDFDRYGLVPRSSPRQADLIVTAGTITMKMAPSLIRLYEQMPEPKYVIAMGACTITGGMFSTDSYSTVRGVDKLIPVDIYLPGCPPKPEAIMDAVTKLRKKIARNRFVNRASRPIRTKYFSISHQLNLVPGTCAGKYNWDRENCGTKLAPANFSENCQKFANEHDELKSAI</sequence>
<protein>
    <recommendedName>
        <fullName evidence="1">NAD(P)H-quinone oxidoreductase subunit K, chloroplastic</fullName>
        <ecNumber evidence="1">7.1.1.-</ecNumber>
    </recommendedName>
    <alternativeName>
        <fullName evidence="1">NAD(P)H dehydrogenase subunit K</fullName>
    </alternativeName>
    <alternativeName>
        <fullName evidence="1">NADH-plastoquinone oxidoreductase subunit K</fullName>
    </alternativeName>
</protein>
<reference key="1">
    <citation type="journal article" date="2003" name="DNA Res.">
        <title>Complete nucleotide sequence of the chloroplast genome from a leptosporangiate fern, Adiantum capillus-veneris L.</title>
        <authorList>
            <person name="Wolf P.G."/>
            <person name="Rowe C.A."/>
            <person name="Sinclair R.B."/>
            <person name="Hasebe M."/>
        </authorList>
    </citation>
    <scope>NUCLEOTIDE SEQUENCE [LARGE SCALE GENOMIC DNA]</scope>
</reference>
<reference key="2">
    <citation type="journal article" date="2004" name="Gene">
        <title>High levels of RNA editing in a vascular plant chloroplast genome: analysis of transcripts from the fern Adiantum capillus-veneris.</title>
        <authorList>
            <person name="Wolf P.G."/>
            <person name="Rowe C.A."/>
            <person name="Hasebe M."/>
        </authorList>
    </citation>
    <scope>NUCLEOTIDE SEQUENCE [GENOMIC DNA]</scope>
    <scope>RNA EDITING</scope>
    <source>
        <tissue>Frond</tissue>
    </source>
</reference>
<accession>Q85FL6</accession>
<comment type="function">
    <text evidence="1">NDH shuttles electrons from NAD(P)H:plastoquinone, via FMN and iron-sulfur (Fe-S) centers, to quinones in the photosynthetic chain and possibly in a chloroplast respiratory chain. The immediate electron acceptor for the enzyme in this species is believed to be plastoquinone. Couples the redox reaction to proton translocation, and thus conserves the redox energy in a proton gradient.</text>
</comment>
<comment type="catalytic activity">
    <reaction evidence="1">
        <text>a plastoquinone + NADH + (n+1) H(+)(in) = a plastoquinol + NAD(+) + n H(+)(out)</text>
        <dbReference type="Rhea" id="RHEA:42608"/>
        <dbReference type="Rhea" id="RHEA-COMP:9561"/>
        <dbReference type="Rhea" id="RHEA-COMP:9562"/>
        <dbReference type="ChEBI" id="CHEBI:15378"/>
        <dbReference type="ChEBI" id="CHEBI:17757"/>
        <dbReference type="ChEBI" id="CHEBI:57540"/>
        <dbReference type="ChEBI" id="CHEBI:57945"/>
        <dbReference type="ChEBI" id="CHEBI:62192"/>
    </reaction>
</comment>
<comment type="catalytic activity">
    <reaction evidence="1">
        <text>a plastoquinone + NADPH + (n+1) H(+)(in) = a plastoquinol + NADP(+) + n H(+)(out)</text>
        <dbReference type="Rhea" id="RHEA:42612"/>
        <dbReference type="Rhea" id="RHEA-COMP:9561"/>
        <dbReference type="Rhea" id="RHEA-COMP:9562"/>
        <dbReference type="ChEBI" id="CHEBI:15378"/>
        <dbReference type="ChEBI" id="CHEBI:17757"/>
        <dbReference type="ChEBI" id="CHEBI:57783"/>
        <dbReference type="ChEBI" id="CHEBI:58349"/>
        <dbReference type="ChEBI" id="CHEBI:62192"/>
    </reaction>
</comment>
<comment type="cofactor">
    <cofactor evidence="1">
        <name>[4Fe-4S] cluster</name>
        <dbReference type="ChEBI" id="CHEBI:49883"/>
    </cofactor>
    <text evidence="1">Binds 1 [4Fe-4S] cluster.</text>
</comment>
<comment type="subunit">
    <text evidence="1">NDH is composed of at least 16 different subunits, 5 of which are encoded in the nucleus.</text>
</comment>
<comment type="subcellular location">
    <subcellularLocation>
        <location evidence="1">Plastid</location>
        <location evidence="1">Chloroplast thylakoid membrane</location>
        <topology evidence="1">Peripheral membrane protein</topology>
        <orientation evidence="1">Stromal side</orientation>
    </subcellularLocation>
</comment>
<comment type="RNA editing">
    <location>
        <position position="113" evidence="2"/>
    </location>
    <location>
        <position position="159" evidence="2"/>
    </location>
</comment>
<comment type="similarity">
    <text evidence="1">Belongs to the complex I 20 kDa subunit family.</text>
</comment>
<name>NDHK_ADICA</name>